<dbReference type="EC" id="4.2.1.166" evidence="5"/>
<dbReference type="EMBL" id="X65195">
    <property type="protein sequence ID" value="CAJ14040.1"/>
    <property type="molecule type" value="Genomic_DNA"/>
</dbReference>
<dbReference type="EMBL" id="AY632421">
    <property type="protein sequence ID" value="AAU00075.1"/>
    <property type="molecule type" value="Genomic_DNA"/>
</dbReference>
<dbReference type="EMBL" id="GG657757">
    <property type="protein sequence ID" value="EFL30525.1"/>
    <property type="status" value="ALT_INIT"/>
    <property type="molecule type" value="Genomic_DNA"/>
</dbReference>
<dbReference type="RefSeq" id="WP_039931977.1">
    <property type="nucleotide sequence ID" value="NZ_GG657757.1"/>
</dbReference>
<dbReference type="SMR" id="D9XF46"/>
<dbReference type="STRING" id="591159.SSQG_01043"/>
<dbReference type="KEGG" id="ag:CAJ14040"/>
<dbReference type="eggNOG" id="COG1048">
    <property type="taxonomic scope" value="Bacteria"/>
</dbReference>
<dbReference type="HOGENOM" id="CLU_013476_2_1_11"/>
<dbReference type="OrthoDB" id="9764318at2"/>
<dbReference type="BioCyc" id="MetaCyc:MONOMER-15048"/>
<dbReference type="BRENDA" id="4.2.1.166">
    <property type="organism ID" value="6116"/>
</dbReference>
<dbReference type="UniPathway" id="UPA00197"/>
<dbReference type="Proteomes" id="UP000004184">
    <property type="component" value="Unassembled WGS sequence"/>
</dbReference>
<dbReference type="GO" id="GO:0047456">
    <property type="term" value="F:2-methylisocitrate dehydratase activity"/>
    <property type="evidence" value="ECO:0007669"/>
    <property type="project" value="UniProtKB-EC"/>
</dbReference>
<dbReference type="GO" id="GO:0051539">
    <property type="term" value="F:4 iron, 4 sulfur cluster binding"/>
    <property type="evidence" value="ECO:0007669"/>
    <property type="project" value="UniProtKB-KW"/>
</dbReference>
<dbReference type="GO" id="GO:0003994">
    <property type="term" value="F:aconitate hydratase activity"/>
    <property type="evidence" value="ECO:0007669"/>
    <property type="project" value="UniProtKB-EC"/>
</dbReference>
<dbReference type="GO" id="GO:0046872">
    <property type="term" value="F:metal ion binding"/>
    <property type="evidence" value="ECO:0007669"/>
    <property type="project" value="UniProtKB-KW"/>
</dbReference>
<dbReference type="GO" id="GO:0017000">
    <property type="term" value="P:antibiotic biosynthetic process"/>
    <property type="evidence" value="ECO:0007669"/>
    <property type="project" value="UniProtKB-KW"/>
</dbReference>
<dbReference type="GO" id="GO:0006099">
    <property type="term" value="P:tricarboxylic acid cycle"/>
    <property type="evidence" value="ECO:0007669"/>
    <property type="project" value="UniProtKB-UniPathway"/>
</dbReference>
<dbReference type="CDD" id="cd01580">
    <property type="entry name" value="AcnA_IRP_Swivel"/>
    <property type="match status" value="1"/>
</dbReference>
<dbReference type="FunFam" id="3.20.19.10:FF:000001">
    <property type="entry name" value="Aconitate hydratase"/>
    <property type="match status" value="1"/>
</dbReference>
<dbReference type="Gene3D" id="6.10.190.10">
    <property type="match status" value="1"/>
</dbReference>
<dbReference type="Gene3D" id="3.30.499.10">
    <property type="entry name" value="Aconitase, domain 3"/>
    <property type="match status" value="2"/>
</dbReference>
<dbReference type="Gene3D" id="3.20.19.10">
    <property type="entry name" value="Aconitase, domain 4"/>
    <property type="match status" value="1"/>
</dbReference>
<dbReference type="InterPro" id="IPR044137">
    <property type="entry name" value="AcnA_IRP_Swivel"/>
</dbReference>
<dbReference type="InterPro" id="IPR015931">
    <property type="entry name" value="Acnase/IPM_dHydase_lsu_aba_1/3"/>
</dbReference>
<dbReference type="InterPro" id="IPR001030">
    <property type="entry name" value="Acoase/IPM_deHydtase_lsu_aba"/>
</dbReference>
<dbReference type="InterPro" id="IPR015928">
    <property type="entry name" value="Aconitase/3IPM_dehydase_swvl"/>
</dbReference>
<dbReference type="InterPro" id="IPR006249">
    <property type="entry name" value="Aconitase/IRP2"/>
</dbReference>
<dbReference type="InterPro" id="IPR018136">
    <property type="entry name" value="Aconitase_4Fe-4S_BS"/>
</dbReference>
<dbReference type="InterPro" id="IPR036008">
    <property type="entry name" value="Aconitase_4Fe-4S_dom"/>
</dbReference>
<dbReference type="InterPro" id="IPR000573">
    <property type="entry name" value="AconitaseA/IPMdHydase_ssu_swvl"/>
</dbReference>
<dbReference type="NCBIfam" id="TIGR01341">
    <property type="entry name" value="aconitase_1"/>
    <property type="match status" value="1"/>
</dbReference>
<dbReference type="NCBIfam" id="NF006757">
    <property type="entry name" value="PRK09277.1"/>
    <property type="match status" value="1"/>
</dbReference>
<dbReference type="NCBIfam" id="NF009520">
    <property type="entry name" value="PRK12881.1"/>
    <property type="match status" value="1"/>
</dbReference>
<dbReference type="PANTHER" id="PTHR11670">
    <property type="entry name" value="ACONITASE/IRON-RESPONSIVE ELEMENT FAMILY MEMBER"/>
    <property type="match status" value="1"/>
</dbReference>
<dbReference type="Pfam" id="PF00330">
    <property type="entry name" value="Aconitase"/>
    <property type="match status" value="1"/>
</dbReference>
<dbReference type="Pfam" id="PF00694">
    <property type="entry name" value="Aconitase_C"/>
    <property type="match status" value="1"/>
</dbReference>
<dbReference type="PRINTS" id="PR00415">
    <property type="entry name" value="ACONITASE"/>
</dbReference>
<dbReference type="SUPFAM" id="SSF53732">
    <property type="entry name" value="Aconitase iron-sulfur domain"/>
    <property type="match status" value="1"/>
</dbReference>
<dbReference type="SUPFAM" id="SSF52016">
    <property type="entry name" value="LeuD/IlvD-like"/>
    <property type="match status" value="1"/>
</dbReference>
<dbReference type="PROSITE" id="PS00450">
    <property type="entry name" value="ACONITASE_1"/>
    <property type="match status" value="1"/>
</dbReference>
<keyword id="KW-0004">4Fe-4S</keyword>
<keyword id="KW-0045">Antibiotic biosynthesis</keyword>
<keyword id="KW-0408">Iron</keyword>
<keyword id="KW-0411">Iron-sulfur</keyword>
<keyword id="KW-0456">Lyase</keyword>
<keyword id="KW-0479">Metal-binding</keyword>
<keyword id="KW-1185">Reference proteome</keyword>
<protein>
    <recommendedName>
        <fullName evidence="3">Phosphinomethylmalate isomerase</fullName>
        <ecNumber evidence="5">4.2.1.166</ecNumber>
    </recommendedName>
</protein>
<evidence type="ECO:0000250" key="1">
    <source>
        <dbReference type="UniProtKB" id="P36683"/>
    </source>
</evidence>
<evidence type="ECO:0000269" key="2">
    <source>
    </source>
</evidence>
<evidence type="ECO:0000303" key="3">
    <source>
    </source>
</evidence>
<evidence type="ECO:0000305" key="4"/>
<evidence type="ECO:0000305" key="5">
    <source>
    </source>
</evidence>
<evidence type="ECO:0000305" key="6">
    <source>
    </source>
</evidence>
<evidence type="ECO:0000305" key="7">
    <source>
    </source>
</evidence>
<evidence type="ECO:0000312" key="8">
    <source>
        <dbReference type="EMBL" id="AAU00075.1"/>
    </source>
</evidence>
<evidence type="ECO:0000312" key="9">
    <source>
        <dbReference type="EMBL" id="CAJ14040.1"/>
    </source>
</evidence>
<evidence type="ECO:0000312" key="10">
    <source>
        <dbReference type="EMBL" id="EFL30525.1"/>
    </source>
</evidence>
<organism>
    <name type="scientific">Streptomyces viridochromogenes (strain DSM 40736 / JCM 4977 / BCRC 1201 / Tue 494)</name>
    <dbReference type="NCBI Taxonomy" id="591159"/>
    <lineage>
        <taxon>Bacteria</taxon>
        <taxon>Bacillati</taxon>
        <taxon>Actinomycetota</taxon>
        <taxon>Actinomycetes</taxon>
        <taxon>Kitasatosporales</taxon>
        <taxon>Streptomycetaceae</taxon>
        <taxon>Streptomyces</taxon>
    </lineage>
</organism>
<gene>
    <name evidence="3" type="primary">pmi</name>
    <name evidence="10" type="ORF">SSQG_01043</name>
</gene>
<accession>D9XF46</accession>
<accession>Q4JFF1</accession>
<accession>Q5IW57</accession>
<sequence length="894" mass="95169">MRHGSQNSEHPDSFGARDVIEVAGESFEIFRLLNAVPSAGSLPYSLRILLENLLRHEDGVHVHAGLVDALAAWDPRGPAPEILFHPARVVMQDYSGVPCLVDLAAMREAFVRLGGAAETLSPQVPVDLVVDHSVMADVFGTPDAYARNAALDHARNRERYELLRWAEATFDRLRIVPPNTGIIHQVNLERLAGVVIADDTGSLPALYPDTVVGTDSHTPMVNGLGVLGWGVGGIEAVAAVLGRPLTLRVPKVIGCELTGRPADGVTATDIVLTLTERLRAHGVVGAYIEFNGPGLAALSAADRATIANMCPEYGATAALFPVDDEVLRYLRATGRPERHLDLVRAYAETQGLWYDPAAAATIRYTERVRFDLASVVPSIAGPRRPQDRVPLATTRTAFAEAVSEVNGGTARRAEVTAPDGSRHTLGDGAVVLAAITSCTNTSNPALMIAAGLLARKAVELGLQPRPWVKSTLAPGSAAVMEYLARAGLDTYLDKLGFSLVAYGCTSCIGNSGPLPESVAGAVRESGLASVAVLSGNRNFEGRINPDVRMNYLASPPLVVAYALAGTMDIDLTTEPLGTGSDGRPVTLADIWPDSREIDEVARTAVDPGTYTQMYDSLMAGDERWRALPAHPQQLFPWAEDSTYIAPPPYFVGTTARPRPLDDIRGARVLADLGDSVTTDHISPAGGIPAHSAAGVFLRELGVPPGDFNSYGARRCNHEVLLRGLFSNPRLRNRLAAGKTGGHTVNHLTGELTTMYEAAVAYQEAGVPLVVLAGREYGTGSSRDWAAKGPALIGVRAVIAESFERIHRSNLVGMGILPLEFPAGQNARTLGLTGAEEFDISGVREFSESVPRTVRVTAGAVSFDAVVRVDTAMEAEFIRHGGIMPFTLRGLLESA</sequence>
<feature type="chain" id="PRO_0000460201" description="Phosphinomethylmalate isomerase">
    <location>
        <begin position="1"/>
        <end position="894"/>
    </location>
</feature>
<feature type="binding site" evidence="1">
    <location>
        <position position="438"/>
    </location>
    <ligand>
        <name>[4Fe-4S] cluster</name>
        <dbReference type="ChEBI" id="CHEBI:49883"/>
    </ligand>
</feature>
<feature type="binding site" evidence="1">
    <location>
        <position position="504"/>
    </location>
    <ligand>
        <name>[4Fe-4S] cluster</name>
        <dbReference type="ChEBI" id="CHEBI:49883"/>
    </ligand>
</feature>
<feature type="binding site" evidence="1">
    <location>
        <position position="507"/>
    </location>
    <ligand>
        <name>[4Fe-4S] cluster</name>
        <dbReference type="ChEBI" id="CHEBI:49883"/>
    </ligand>
</feature>
<feature type="sequence conflict" description="In Ref. 2; CAJ14040." evidence="4" ref="2">
    <location>
        <begin position="516"/>
        <end position="523"/>
    </location>
</feature>
<feature type="sequence conflict" description="In Ref. 2; CAJ14040." evidence="4" ref="2">
    <original>A</original>
    <variation>AAP</variation>
    <location>
        <position position="601"/>
    </location>
</feature>
<feature type="sequence conflict" description="In Ref. 2; CAJ14040." evidence="4" ref="2">
    <original>A</original>
    <variation>YV</variation>
    <location>
        <position position="629"/>
    </location>
</feature>
<reference evidence="9" key="1">
    <citation type="journal article" date="2001" name="Appl. Environ. Microbiol.">
        <title>The phosphinomethylmalate isomerase gene pmi, encoding an aconitase-like enzyme, is involved in the synthesis of phosphinothricin tripeptide in Streptomyces viridochromogenes.</title>
        <authorList>
            <person name="Heinzelmann E."/>
            <person name="Kaspar S."/>
            <person name="Kienzlen G."/>
            <person name="Recktenwald J."/>
            <person name="Wohlleben W."/>
            <person name="Schwartz D."/>
        </authorList>
    </citation>
    <scope>NUCLEOTIDE SEQUENCE [GENOMIC DNA]</scope>
    <scope>FUNCTION IN PTT SYNTHESIS</scope>
    <scope>PATHWAY</scope>
    <scope>DISRUPTION PHENOTYPE</scope>
    <source>
        <strain>DSM 40736 / JCM 4977 / BCRC 1201 / Tue 494</strain>
    </source>
</reference>
<reference evidence="9" key="2">
    <citation type="journal article" date="2004" name="Appl. Environ. Microbiol.">
        <title>Biosynthetic gene cluster of the herbicide phosphinothricin tripeptide from Streptomyces viridochromogenes Tu494.</title>
        <authorList>
            <person name="Schwartz D."/>
            <person name="Berger S."/>
            <person name="Heinzelmann E."/>
            <person name="Muschko K."/>
            <person name="Welzel K."/>
            <person name="Wohlleben W."/>
        </authorList>
    </citation>
    <scope>NUCLEOTIDE SEQUENCE [GENOMIC DNA]</scope>
    <source>
        <strain>DSM 40736 / JCM 4977 / BCRC 1201 / Tue 494</strain>
    </source>
</reference>
<reference evidence="8" key="3">
    <citation type="journal article" date="2005" name="Antimicrob. Agents Chemother.">
        <title>Molecular cloning, sequence analysis, and heterologous expression of the phosphinothricin tripeptide biosynthetic gene cluster from Streptomyces viridochromogenes DSM 40736.</title>
        <authorList>
            <person name="Blodgett J.A."/>
            <person name="Zhang J.K."/>
            <person name="Metcalf W.W."/>
        </authorList>
    </citation>
    <scope>NUCLEOTIDE SEQUENCE [GENOMIC DNA]</scope>
    <source>
        <strain>DSM 40736 / JCM 4977 / BCRC 1201 / Tue 494</strain>
    </source>
</reference>
<reference evidence="10" key="4">
    <citation type="submission" date="2009-02" db="EMBL/GenBank/DDBJ databases">
        <title>Annotation of Streptomyces viridochromogenes strain DSM 40736.</title>
        <authorList>
            <consortium name="The Broad Institute Genome Sequencing Platform"/>
            <consortium name="Broad Institute Microbial Sequencing Center"/>
            <person name="Fischbach M."/>
            <person name="Godfrey P."/>
            <person name="Ward D."/>
            <person name="Young S."/>
            <person name="Zeng Q."/>
            <person name="Koehrsen M."/>
            <person name="Alvarado L."/>
            <person name="Berlin A.M."/>
            <person name="Bochicchio J."/>
            <person name="Borenstein D."/>
            <person name="Chapman S.B."/>
            <person name="Chen Z."/>
            <person name="Engels R."/>
            <person name="Freedman E."/>
            <person name="Gellesch M."/>
            <person name="Goldberg J."/>
            <person name="Griggs A."/>
            <person name="Gujja S."/>
            <person name="Heilman E.R."/>
            <person name="Heiman D.I."/>
            <person name="Hepburn T.A."/>
            <person name="Howarth C."/>
            <person name="Jen D."/>
            <person name="Larson L."/>
            <person name="Lewis B."/>
            <person name="Mehta T."/>
            <person name="Park D."/>
            <person name="Pearson M."/>
            <person name="Richards J."/>
            <person name="Roberts A."/>
            <person name="Saif S."/>
            <person name="Shea T.D."/>
            <person name="Shenoy N."/>
            <person name="Sisk P."/>
            <person name="Stolte C."/>
            <person name="Sykes S.N."/>
            <person name="Thomson T."/>
            <person name="Walk T."/>
            <person name="White J."/>
            <person name="Yandava C."/>
            <person name="Straight P."/>
            <person name="Clardy J."/>
            <person name="Hung D."/>
            <person name="Kolter R."/>
            <person name="Mekalanos J."/>
            <person name="Walker S."/>
            <person name="Walsh C.T."/>
            <person name="Wieland-Brown L.C."/>
            <person name="Haas B."/>
            <person name="Nusbaum C."/>
            <person name="Birren B."/>
        </authorList>
    </citation>
    <scope>NUCLEOTIDE SEQUENCE [LARGE SCALE GENOMIC DNA]</scope>
    <source>
        <strain>DSM 40736 / JCM 4977 / BCRC 1201 / Tue 494</strain>
    </source>
</reference>
<proteinExistence type="evidence at protein level"/>
<name>PMI_STRVT</name>
<comment type="function">
    <text evidence="2">Isomerase involved in the biosynthesis of phosphinothricin tripeptide (PTT), also known as bialaphos (BA), a natural-product antibiotic and potent herbicide (PubMed:11472937). Probably catalyzes the isomerization of phosphinomethylmalate to phosphinomethylisomalate (PubMed:11472937). Shows no standard aconitase activity with citrate as a substrate and is not able to complement an acnA mutant (PubMed:11472937).</text>
</comment>
<comment type="catalytic activity">
    <reaction evidence="5">
        <text>phosphinomethylmalate = phosphinomethylisomalate</text>
        <dbReference type="Rhea" id="RHEA:49504"/>
        <dbReference type="ChEBI" id="CHEBI:91181"/>
        <dbReference type="ChEBI" id="CHEBI:131650"/>
        <dbReference type="EC" id="4.2.1.166"/>
    </reaction>
    <physiologicalReaction direction="left-to-right" evidence="5">
        <dbReference type="Rhea" id="RHEA:49505"/>
    </physiologicalReaction>
</comment>
<comment type="catalytic activity">
    <reaction evidence="5">
        <text>phosphinomethylmalate = 2-(phosphinatomethylidene)butanedioate + H2O</text>
        <dbReference type="Rhea" id="RHEA:49508"/>
        <dbReference type="ChEBI" id="CHEBI:15377"/>
        <dbReference type="ChEBI" id="CHEBI:91181"/>
        <dbReference type="ChEBI" id="CHEBI:131651"/>
    </reaction>
    <physiologicalReaction direction="left-to-right" evidence="5">
        <dbReference type="Rhea" id="RHEA:49509"/>
    </physiologicalReaction>
</comment>
<comment type="catalytic activity">
    <reaction evidence="5">
        <text>2-(phosphinatomethylidene)butanedioate + H2O = phosphinomethylisomalate</text>
        <dbReference type="Rhea" id="RHEA:49512"/>
        <dbReference type="ChEBI" id="CHEBI:15377"/>
        <dbReference type="ChEBI" id="CHEBI:131650"/>
        <dbReference type="ChEBI" id="CHEBI:131651"/>
    </reaction>
    <physiologicalReaction direction="left-to-right" evidence="5">
        <dbReference type="Rhea" id="RHEA:49513"/>
    </physiologicalReaction>
</comment>
<comment type="cofactor">
    <cofactor evidence="1">
        <name>[4Fe-4S] cluster</name>
        <dbReference type="ChEBI" id="CHEBI:49883"/>
    </cofactor>
    <text evidence="1">Binds 1 [4Fe-4S] cluster per subunit.</text>
</comment>
<comment type="pathway">
    <text evidence="2 6 7">Secondary metabolite biosynthesis; bialaphos biosynthesis.</text>
</comment>
<comment type="disruption phenotype">
    <text evidence="2">Disruption mutant loses the ability to produce PTT, but it shows normal growth behavior and is able to form aerial mycelium and to sporulate (PubMed:11472937). Disruption of the gene does not affect aconitase activity (PubMed:11472937).</text>
</comment>
<comment type="miscellaneous">
    <text evidence="2">The aconitase AcnA cannot substitute for the function of Pmi, despite the high similarity of the two proteins.</text>
</comment>
<comment type="similarity">
    <text evidence="4">Belongs to the aconitase/IPM isomerase family.</text>
</comment>
<comment type="sequence caution" evidence="4">
    <conflict type="erroneous initiation">
        <sequence resource="EMBL-CDS" id="EFL30525"/>
    </conflict>
    <text>Extended N-terminus.</text>
</comment>